<name>RFCL_METM6</name>
<accession>A9A6N2</accession>
<gene>
    <name evidence="1" type="primary">rfcL</name>
    <name type="ordered locus">MmarC6_0629</name>
</gene>
<protein>
    <recommendedName>
        <fullName evidence="1">Replication factor C large subunit</fullName>
        <shortName evidence="1">RFC large subunit</shortName>
    </recommendedName>
    <alternativeName>
        <fullName evidence="1">Clamp loader large subunit</fullName>
    </alternativeName>
</protein>
<dbReference type="EMBL" id="CP000867">
    <property type="protein sequence ID" value="ABX01446.1"/>
    <property type="molecule type" value="Genomic_DNA"/>
</dbReference>
<dbReference type="SMR" id="A9A6N2"/>
<dbReference type="STRING" id="444158.MmarC6_0629"/>
<dbReference type="KEGG" id="mmx:MmarC6_0629"/>
<dbReference type="eggNOG" id="arCOG00470">
    <property type="taxonomic scope" value="Archaea"/>
</dbReference>
<dbReference type="HOGENOM" id="CLU_027255_1_0_2"/>
<dbReference type="OrthoDB" id="8658at2157"/>
<dbReference type="PhylomeDB" id="A9A6N2"/>
<dbReference type="GO" id="GO:0005524">
    <property type="term" value="F:ATP binding"/>
    <property type="evidence" value="ECO:0007669"/>
    <property type="project" value="UniProtKB-UniRule"/>
</dbReference>
<dbReference type="GO" id="GO:0016887">
    <property type="term" value="F:ATP hydrolysis activity"/>
    <property type="evidence" value="ECO:0007669"/>
    <property type="project" value="InterPro"/>
</dbReference>
<dbReference type="GO" id="GO:0003689">
    <property type="term" value="F:DNA clamp loader activity"/>
    <property type="evidence" value="ECO:0007669"/>
    <property type="project" value="UniProtKB-UniRule"/>
</dbReference>
<dbReference type="GO" id="GO:0006260">
    <property type="term" value="P:DNA replication"/>
    <property type="evidence" value="ECO:0007669"/>
    <property type="project" value="UniProtKB-UniRule"/>
</dbReference>
<dbReference type="CDD" id="cd00009">
    <property type="entry name" value="AAA"/>
    <property type="match status" value="1"/>
</dbReference>
<dbReference type="CDD" id="cd18140">
    <property type="entry name" value="HLD_clamp_RFC"/>
    <property type="match status" value="1"/>
</dbReference>
<dbReference type="Gene3D" id="1.10.8.60">
    <property type="match status" value="1"/>
</dbReference>
<dbReference type="Gene3D" id="3.40.50.300">
    <property type="entry name" value="P-loop containing nucleotide triphosphate hydrolases"/>
    <property type="match status" value="1"/>
</dbReference>
<dbReference type="HAMAP" id="MF_01508">
    <property type="entry name" value="RfcL"/>
    <property type="match status" value="1"/>
</dbReference>
<dbReference type="InterPro" id="IPR003593">
    <property type="entry name" value="AAA+_ATPase"/>
</dbReference>
<dbReference type="InterPro" id="IPR003959">
    <property type="entry name" value="ATPase_AAA_core"/>
</dbReference>
<dbReference type="InterPro" id="IPR027417">
    <property type="entry name" value="P-loop_NTPase"/>
</dbReference>
<dbReference type="InterPro" id="IPR023935">
    <property type="entry name" value="Rep_factor-C_lsu"/>
</dbReference>
<dbReference type="InterPro" id="IPR047854">
    <property type="entry name" value="RFC_lid"/>
</dbReference>
<dbReference type="NCBIfam" id="NF003229">
    <property type="entry name" value="PRK04195.1-5"/>
    <property type="match status" value="1"/>
</dbReference>
<dbReference type="NCBIfam" id="NF003230">
    <property type="entry name" value="PRK04195.1-6"/>
    <property type="match status" value="1"/>
</dbReference>
<dbReference type="PANTHER" id="PTHR23389">
    <property type="entry name" value="CHROMOSOME TRANSMISSION FIDELITY FACTOR 18"/>
    <property type="match status" value="1"/>
</dbReference>
<dbReference type="PANTHER" id="PTHR23389:SF6">
    <property type="entry name" value="REPLICATION FACTOR C SUBUNIT 1"/>
    <property type="match status" value="1"/>
</dbReference>
<dbReference type="Pfam" id="PF00004">
    <property type="entry name" value="AAA"/>
    <property type="match status" value="1"/>
</dbReference>
<dbReference type="Pfam" id="PF21960">
    <property type="entry name" value="RCF1-5-like_lid"/>
    <property type="match status" value="1"/>
</dbReference>
<dbReference type="SMART" id="SM00382">
    <property type="entry name" value="AAA"/>
    <property type="match status" value="1"/>
</dbReference>
<dbReference type="SUPFAM" id="SSF52540">
    <property type="entry name" value="P-loop containing nucleoside triphosphate hydrolases"/>
    <property type="match status" value="1"/>
</dbReference>
<reference key="1">
    <citation type="submission" date="2007-10" db="EMBL/GenBank/DDBJ databases">
        <title>Complete sequence of Methanococcus maripaludis C6.</title>
        <authorList>
            <consortium name="US DOE Joint Genome Institute"/>
            <person name="Copeland A."/>
            <person name="Lucas S."/>
            <person name="Lapidus A."/>
            <person name="Barry K."/>
            <person name="Glavina del Rio T."/>
            <person name="Dalin E."/>
            <person name="Tice H."/>
            <person name="Pitluck S."/>
            <person name="Clum A."/>
            <person name="Schmutz J."/>
            <person name="Larimer F."/>
            <person name="Land M."/>
            <person name="Hauser L."/>
            <person name="Kyrpides N."/>
            <person name="Mikhailova N."/>
            <person name="Sieprawska-Lupa M."/>
            <person name="Whitman W.B."/>
            <person name="Richardson P."/>
        </authorList>
    </citation>
    <scope>NUCLEOTIDE SEQUENCE [LARGE SCALE GENOMIC DNA]</scope>
    <source>
        <strain>C6 / ATCC BAA-1332</strain>
    </source>
</reference>
<proteinExistence type="inferred from homology"/>
<organism>
    <name type="scientific">Methanococcus maripaludis (strain C6 / ATCC BAA-1332)</name>
    <dbReference type="NCBI Taxonomy" id="444158"/>
    <lineage>
        <taxon>Archaea</taxon>
        <taxon>Methanobacteriati</taxon>
        <taxon>Methanobacteriota</taxon>
        <taxon>Methanomada group</taxon>
        <taxon>Methanococci</taxon>
        <taxon>Methanococcales</taxon>
        <taxon>Methanococcaceae</taxon>
        <taxon>Methanococcus</taxon>
    </lineage>
</organism>
<sequence length="484" mass="54448">MEEWVEKYRPKSLNDVAGHNKTKETLIEWIESFVSGQKQKPILLAGPPGSGKTTLAYAIAKDYAYDVIELNASDKRNKDVISQVVGTAATSKSITGRRTLIVLDEVDGLSGNDDRGGVAEIIKVLKTAENPVILTANDVYKPALMTLRNNVNLINVGSVHTNSIPPVLRKIALKEGFEIDEKVIKTIASHAGGDLRAAINDLQSLATGGSLEVEDAKELPDRDSEKSIFDAMRIIMKTTHYDIATSATRDVKEELGTIEEWISENLPKEYLKYKDLANGYDYLSKSDVFLGRVFRRQYFGLWRYASALMTAGTALAKEEKYRGFTRYAPPSIFTKLSRTKGTRQKMKDILKKIALKTHTSTKRARNTLDYMVVIFESNPEVSAELVEYYELTKEEMEFLTNKTITKNIFSVIAGKKPKVEKEIPKKKKTEEVMPIIPKRPKISELPKEPLKEVIETIEKSVENADTKEKEKKDPKKQATLDSFF</sequence>
<comment type="function">
    <text evidence="1">Part of the RFC clamp loader complex which loads the PCNA sliding clamp onto DNA.</text>
</comment>
<comment type="subunit">
    <text evidence="1">Heteromultimer composed of small subunits (RfcS) and large subunits (RfcL).</text>
</comment>
<comment type="similarity">
    <text evidence="1">Belongs to the activator 1 small subunits family. RfcL subfamily.</text>
</comment>
<evidence type="ECO:0000255" key="1">
    <source>
        <dbReference type="HAMAP-Rule" id="MF_01508"/>
    </source>
</evidence>
<evidence type="ECO:0000256" key="2">
    <source>
        <dbReference type="SAM" id="MobiDB-lite"/>
    </source>
</evidence>
<feature type="chain" id="PRO_1000195421" description="Replication factor C large subunit">
    <location>
        <begin position="1"/>
        <end position="484"/>
    </location>
</feature>
<feature type="region of interest" description="Disordered" evidence="2">
    <location>
        <begin position="463"/>
        <end position="484"/>
    </location>
</feature>
<feature type="compositionally biased region" description="Basic and acidic residues" evidence="2">
    <location>
        <begin position="463"/>
        <end position="478"/>
    </location>
</feature>
<feature type="binding site" evidence="1">
    <location>
        <begin position="46"/>
        <end position="53"/>
    </location>
    <ligand>
        <name>ATP</name>
        <dbReference type="ChEBI" id="CHEBI:30616"/>
    </ligand>
</feature>
<keyword id="KW-0067">ATP-binding</keyword>
<keyword id="KW-0235">DNA replication</keyword>
<keyword id="KW-0547">Nucleotide-binding</keyword>